<name>DUT_YERP3</name>
<protein>
    <recommendedName>
        <fullName evidence="1">Deoxyuridine 5'-triphosphate nucleotidohydrolase</fullName>
        <shortName evidence="1">dUTPase</shortName>
        <ecNumber evidence="1">3.6.1.23</ecNumber>
    </recommendedName>
    <alternativeName>
        <fullName evidence="1">dUTP pyrophosphatase</fullName>
    </alternativeName>
</protein>
<reference key="1">
    <citation type="journal article" date="2007" name="PLoS Genet.">
        <title>The complete genome sequence of Yersinia pseudotuberculosis IP31758, the causative agent of Far East scarlet-like fever.</title>
        <authorList>
            <person name="Eppinger M."/>
            <person name="Rosovitz M.J."/>
            <person name="Fricke W.F."/>
            <person name="Rasko D.A."/>
            <person name="Kokorina G."/>
            <person name="Fayolle C."/>
            <person name="Lindler L.E."/>
            <person name="Carniel E."/>
            <person name="Ravel J."/>
        </authorList>
    </citation>
    <scope>NUCLEOTIDE SEQUENCE [LARGE SCALE GENOMIC DNA]</scope>
    <source>
        <strain>IP 31758</strain>
    </source>
</reference>
<accession>A7FCT2</accession>
<dbReference type="EC" id="3.6.1.23" evidence="1"/>
<dbReference type="EMBL" id="CP000720">
    <property type="protein sequence ID" value="ABS48610.1"/>
    <property type="molecule type" value="Genomic_DNA"/>
</dbReference>
<dbReference type="SMR" id="A7FCT2"/>
<dbReference type="KEGG" id="ypi:YpsIP31758_0059"/>
<dbReference type="HOGENOM" id="CLU_068508_1_1_6"/>
<dbReference type="UniPathway" id="UPA00610">
    <property type="reaction ID" value="UER00666"/>
</dbReference>
<dbReference type="Proteomes" id="UP000002412">
    <property type="component" value="Chromosome"/>
</dbReference>
<dbReference type="GO" id="GO:0004170">
    <property type="term" value="F:dUTP diphosphatase activity"/>
    <property type="evidence" value="ECO:0007669"/>
    <property type="project" value="UniProtKB-UniRule"/>
</dbReference>
<dbReference type="GO" id="GO:0000287">
    <property type="term" value="F:magnesium ion binding"/>
    <property type="evidence" value="ECO:0007669"/>
    <property type="project" value="UniProtKB-UniRule"/>
</dbReference>
<dbReference type="GO" id="GO:0006226">
    <property type="term" value="P:dUMP biosynthetic process"/>
    <property type="evidence" value="ECO:0007669"/>
    <property type="project" value="UniProtKB-UniRule"/>
</dbReference>
<dbReference type="GO" id="GO:0046081">
    <property type="term" value="P:dUTP catabolic process"/>
    <property type="evidence" value="ECO:0007669"/>
    <property type="project" value="InterPro"/>
</dbReference>
<dbReference type="CDD" id="cd07557">
    <property type="entry name" value="trimeric_dUTPase"/>
    <property type="match status" value="1"/>
</dbReference>
<dbReference type="FunFam" id="2.70.40.10:FF:000002">
    <property type="entry name" value="dUTP diphosphatase"/>
    <property type="match status" value="1"/>
</dbReference>
<dbReference type="Gene3D" id="2.70.40.10">
    <property type="match status" value="1"/>
</dbReference>
<dbReference type="HAMAP" id="MF_00116">
    <property type="entry name" value="dUTPase_bact"/>
    <property type="match status" value="1"/>
</dbReference>
<dbReference type="InterPro" id="IPR008181">
    <property type="entry name" value="dUTPase"/>
</dbReference>
<dbReference type="InterPro" id="IPR029054">
    <property type="entry name" value="dUTPase-like"/>
</dbReference>
<dbReference type="InterPro" id="IPR036157">
    <property type="entry name" value="dUTPase-like_sf"/>
</dbReference>
<dbReference type="InterPro" id="IPR033704">
    <property type="entry name" value="dUTPase_trimeric"/>
</dbReference>
<dbReference type="NCBIfam" id="TIGR00576">
    <property type="entry name" value="dut"/>
    <property type="match status" value="1"/>
</dbReference>
<dbReference type="NCBIfam" id="NF001862">
    <property type="entry name" value="PRK00601.1"/>
    <property type="match status" value="1"/>
</dbReference>
<dbReference type="PANTHER" id="PTHR11241">
    <property type="entry name" value="DEOXYURIDINE 5'-TRIPHOSPHATE NUCLEOTIDOHYDROLASE"/>
    <property type="match status" value="1"/>
</dbReference>
<dbReference type="PANTHER" id="PTHR11241:SF0">
    <property type="entry name" value="DEOXYURIDINE 5'-TRIPHOSPHATE NUCLEOTIDOHYDROLASE"/>
    <property type="match status" value="1"/>
</dbReference>
<dbReference type="Pfam" id="PF00692">
    <property type="entry name" value="dUTPase"/>
    <property type="match status" value="1"/>
</dbReference>
<dbReference type="SUPFAM" id="SSF51283">
    <property type="entry name" value="dUTPase-like"/>
    <property type="match status" value="1"/>
</dbReference>
<organism>
    <name type="scientific">Yersinia pseudotuberculosis serotype O:1b (strain IP 31758)</name>
    <dbReference type="NCBI Taxonomy" id="349747"/>
    <lineage>
        <taxon>Bacteria</taxon>
        <taxon>Pseudomonadati</taxon>
        <taxon>Pseudomonadota</taxon>
        <taxon>Gammaproteobacteria</taxon>
        <taxon>Enterobacterales</taxon>
        <taxon>Yersiniaceae</taxon>
        <taxon>Yersinia</taxon>
    </lineage>
</organism>
<proteinExistence type="inferred from homology"/>
<sequence length="151" mass="16212">MKKIDIKILDPRVGNEFPLPTYATEGSAGLDLRACLDHAVELQPGQTTLLPTGLAIHIGDSALAAVILPRSGLGHKHGIVLGNLVGLIDSDYQGQLMVSVWNRGQQPFTIEPGERIAQMVFVPVVQAEFNLVEDFTDSERGTGGFGHSGRQ</sequence>
<evidence type="ECO:0000255" key="1">
    <source>
        <dbReference type="HAMAP-Rule" id="MF_00116"/>
    </source>
</evidence>
<feature type="chain" id="PRO_1000057781" description="Deoxyuridine 5'-triphosphate nucleotidohydrolase">
    <location>
        <begin position="1"/>
        <end position="151"/>
    </location>
</feature>
<feature type="binding site" evidence="1">
    <location>
        <begin position="70"/>
        <end position="72"/>
    </location>
    <ligand>
        <name>substrate</name>
    </ligand>
</feature>
<feature type="binding site" evidence="1">
    <location>
        <position position="83"/>
    </location>
    <ligand>
        <name>substrate</name>
    </ligand>
</feature>
<feature type="binding site" evidence="1">
    <location>
        <begin position="87"/>
        <end position="89"/>
    </location>
    <ligand>
        <name>substrate</name>
    </ligand>
</feature>
<feature type="binding site" evidence="1">
    <location>
        <position position="97"/>
    </location>
    <ligand>
        <name>substrate</name>
    </ligand>
</feature>
<comment type="function">
    <text evidence="1">This enzyme is involved in nucleotide metabolism: it produces dUMP, the immediate precursor of thymidine nucleotides and it decreases the intracellular concentration of dUTP so that uracil cannot be incorporated into DNA.</text>
</comment>
<comment type="catalytic activity">
    <reaction evidence="1">
        <text>dUTP + H2O = dUMP + diphosphate + H(+)</text>
        <dbReference type="Rhea" id="RHEA:10248"/>
        <dbReference type="ChEBI" id="CHEBI:15377"/>
        <dbReference type="ChEBI" id="CHEBI:15378"/>
        <dbReference type="ChEBI" id="CHEBI:33019"/>
        <dbReference type="ChEBI" id="CHEBI:61555"/>
        <dbReference type="ChEBI" id="CHEBI:246422"/>
        <dbReference type="EC" id="3.6.1.23"/>
    </reaction>
</comment>
<comment type="cofactor">
    <cofactor evidence="1">
        <name>Mg(2+)</name>
        <dbReference type="ChEBI" id="CHEBI:18420"/>
    </cofactor>
</comment>
<comment type="pathway">
    <text evidence="1">Pyrimidine metabolism; dUMP biosynthesis; dUMP from dCTP (dUTP route): step 2/2.</text>
</comment>
<comment type="similarity">
    <text evidence="1">Belongs to the dUTPase family.</text>
</comment>
<gene>
    <name evidence="1" type="primary">dut</name>
    <name type="ordered locus">YpsIP31758_0059</name>
</gene>
<keyword id="KW-0378">Hydrolase</keyword>
<keyword id="KW-0460">Magnesium</keyword>
<keyword id="KW-0479">Metal-binding</keyword>
<keyword id="KW-0546">Nucleotide metabolism</keyword>